<sequence length="72" mass="7864">GDDVKSACCDTCLCTKSNPPTCRCVDVGETCHSACLSCICAYSNPPKCQCFDTQKFCYKACHNSELEEVIKN</sequence>
<reference key="1">
    <citation type="journal article" date="1997" name="J. Protein Chem.">
        <title>Trypsin inhibitor polymorphism: multigene family expression and posttranslational modification.</title>
        <authorList>
            <person name="Quillien L."/>
            <person name="Ferrasson E."/>
            <person name="Molle D."/>
            <person name="Gueguen J."/>
        </authorList>
    </citation>
    <scope>PROTEIN SEQUENCE</scope>
    <source>
        <strain>cv. Frilene</strain>
        <tissue>Seed</tissue>
    </source>
</reference>
<reference key="2">
    <citation type="journal article" date="1999" name="J. Mol. Biol.">
        <title>Dimeric crystal structure of a Bowman-Birk protease inhibitor from pea seeds.</title>
        <authorList>
            <person name="Li de la Sierra I."/>
            <person name="Quillien L."/>
            <person name="Flecker P."/>
            <person name="Gueguen J."/>
            <person name="Brunie S."/>
        </authorList>
    </citation>
    <scope>X-RAY CRYSTALLOGRAPHY (2.70 ANGSTROMS)</scope>
    <scope>DISULFIDE BONDS</scope>
    <source>
        <tissue>Seed</tissue>
    </source>
</reference>
<feature type="chain" id="PRO_0000003275" description="Seed trypsin/chymotrypsin inhibitor IVB">
    <location>
        <begin position="1"/>
        <end position="72"/>
    </location>
</feature>
<feature type="chain" id="PRO_0000003276" description="Seed trypsin/chymotrypsin inhibitor II">
    <location>
        <begin position="1"/>
        <end position="63"/>
    </location>
</feature>
<feature type="site" description="Reactive bond for trypsin">
    <location>
        <begin position="16"/>
        <end position="17"/>
    </location>
</feature>
<feature type="site" description="Reactive bond for chymotrypsin">
    <location>
        <begin position="42"/>
        <end position="43"/>
    </location>
</feature>
<feature type="disulfide bond" evidence="1 3">
    <location>
        <begin position="8"/>
        <end position="61"/>
    </location>
</feature>
<feature type="disulfide bond" evidence="1 3">
    <location>
        <begin position="9"/>
        <end position="24"/>
    </location>
</feature>
<feature type="disulfide bond" evidence="1 3">
    <location>
        <begin position="12"/>
        <end position="57"/>
    </location>
</feature>
<feature type="disulfide bond" evidence="1 3">
    <location>
        <begin position="14"/>
        <end position="22"/>
    </location>
</feature>
<feature type="disulfide bond" evidence="1 3">
    <location>
        <begin position="31"/>
        <end position="38"/>
    </location>
</feature>
<feature type="disulfide bond" evidence="1 3">
    <location>
        <begin position="35"/>
        <end position="50"/>
    </location>
</feature>
<feature type="disulfide bond" evidence="1 3">
    <location>
        <begin position="40"/>
        <end position="48"/>
    </location>
</feature>
<feature type="strand" evidence="4">
    <location>
        <begin position="12"/>
        <end position="19"/>
    </location>
</feature>
<feature type="strand" evidence="4">
    <location>
        <begin position="22"/>
        <end position="24"/>
    </location>
</feature>
<feature type="strand" evidence="4">
    <location>
        <begin position="27"/>
        <end position="30"/>
    </location>
</feature>
<feature type="strand" evidence="4">
    <location>
        <begin position="36"/>
        <end position="45"/>
    </location>
</feature>
<feature type="strand" evidence="4">
    <location>
        <begin position="47"/>
        <end position="50"/>
    </location>
</feature>
<feature type="strand" evidence="4">
    <location>
        <begin position="53"/>
        <end position="56"/>
    </location>
</feature>
<feature type="strand" evidence="4">
    <location>
        <begin position="61"/>
        <end position="63"/>
    </location>
</feature>
<feature type="strand" evidence="4">
    <location>
        <begin position="67"/>
        <end position="70"/>
    </location>
</feature>
<keyword id="KW-0002">3D-structure</keyword>
<keyword id="KW-0903">Direct protein sequencing</keyword>
<keyword id="KW-1015">Disulfide bond</keyword>
<keyword id="KW-0646">Protease inhibitor</keyword>
<keyword id="KW-0722">Serine protease inhibitor</keyword>
<comment type="function">
    <text>Inhibitor of trypsin and of chymotrypsin. May function as a natural phytochemical defense against predators.</text>
</comment>
<comment type="tissue specificity">
    <text>Seed.</text>
</comment>
<comment type="developmental stage">
    <text>During desiccation stage of seed development increasing activity seems to be associated with appearance of isoform (PSTI II) which has a stronger affinity for trypsin.</text>
</comment>
<comment type="similarity">
    <text evidence="2">Belongs to the Bowman-Birk serine protease inhibitor family.</text>
</comment>
<evidence type="ECO:0000269" key="1">
    <source>
    </source>
</evidence>
<evidence type="ECO:0000305" key="2"/>
<evidence type="ECO:0007744" key="3">
    <source>
        <dbReference type="PDB" id="1PBI"/>
    </source>
</evidence>
<evidence type="ECO:0007829" key="4">
    <source>
        <dbReference type="PDB" id="1PBI"/>
    </source>
</evidence>
<dbReference type="PDB" id="1PBI">
    <property type="method" value="X-ray"/>
    <property type="resolution" value="2.70 A"/>
    <property type="chains" value="A/B=1-72"/>
</dbReference>
<dbReference type="PDBsum" id="1PBI"/>
<dbReference type="SMR" id="P56679"/>
<dbReference type="MEROPS" id="I12.018"/>
<dbReference type="EvolutionaryTrace" id="P56679"/>
<dbReference type="GO" id="GO:0005576">
    <property type="term" value="C:extracellular region"/>
    <property type="evidence" value="ECO:0007669"/>
    <property type="project" value="InterPro"/>
</dbReference>
<dbReference type="GO" id="GO:0004867">
    <property type="term" value="F:serine-type endopeptidase inhibitor activity"/>
    <property type="evidence" value="ECO:0007669"/>
    <property type="project" value="UniProtKB-KW"/>
</dbReference>
<dbReference type="CDD" id="cd00023">
    <property type="entry name" value="BBI"/>
    <property type="match status" value="1"/>
</dbReference>
<dbReference type="FunFam" id="2.10.69.10:FF:000001">
    <property type="entry name" value="Bowman-Birk type proteinase inhibitor"/>
    <property type="match status" value="1"/>
</dbReference>
<dbReference type="Gene3D" id="2.10.69.10">
    <property type="entry name" value="Cysteine Protease (Bromelain) Inhibitor, subunit H"/>
    <property type="match status" value="1"/>
</dbReference>
<dbReference type="InterPro" id="IPR035995">
    <property type="entry name" value="Bowman-Birk_prot_inh"/>
</dbReference>
<dbReference type="InterPro" id="IPR000877">
    <property type="entry name" value="Prot_inh_BBI"/>
</dbReference>
<dbReference type="Pfam" id="PF00228">
    <property type="entry name" value="Bowman-Birk_leg"/>
    <property type="match status" value="1"/>
</dbReference>
<dbReference type="SMART" id="SM00269">
    <property type="entry name" value="BowB"/>
    <property type="match status" value="1"/>
</dbReference>
<dbReference type="SUPFAM" id="SSF57247">
    <property type="entry name" value="Bowman-Birk inhibitor, BBI"/>
    <property type="match status" value="1"/>
</dbReference>
<accession>P56679</accession>
<organism>
    <name type="scientific">Pisum sativum</name>
    <name type="common">Garden pea</name>
    <name type="synonym">Lathyrus oleraceus</name>
    <dbReference type="NCBI Taxonomy" id="3888"/>
    <lineage>
        <taxon>Eukaryota</taxon>
        <taxon>Viridiplantae</taxon>
        <taxon>Streptophyta</taxon>
        <taxon>Embryophyta</taxon>
        <taxon>Tracheophyta</taxon>
        <taxon>Spermatophyta</taxon>
        <taxon>Magnoliopsida</taxon>
        <taxon>eudicotyledons</taxon>
        <taxon>Gunneridae</taxon>
        <taxon>Pentapetalae</taxon>
        <taxon>rosids</taxon>
        <taxon>fabids</taxon>
        <taxon>Fabales</taxon>
        <taxon>Fabaceae</taxon>
        <taxon>Papilionoideae</taxon>
        <taxon>50 kb inversion clade</taxon>
        <taxon>NPAAA clade</taxon>
        <taxon>Hologalegina</taxon>
        <taxon>IRL clade</taxon>
        <taxon>Fabeae</taxon>
        <taxon>Pisum</taxon>
    </lineage>
</organism>
<proteinExistence type="evidence at protein level"/>
<name>IBBB_PEA</name>
<protein>
    <recommendedName>
        <fullName>Seed trypsin/chymotrypsin inhibitor IVB</fullName>
        <shortName>PSTI-IVB</shortName>
    </recommendedName>
    <component>
        <recommendedName>
            <fullName>Seed trypsin/chymotrypsin inhibitor II</fullName>
            <shortName>PSTI II</shortName>
        </recommendedName>
    </component>
</protein>